<comment type="function">
    <text evidence="1">PPIases accelerate the folding of proteins. It catalyzes the cis-trans isomerization of proline imidic peptide bonds in oligopeptides (By similarity).</text>
</comment>
<comment type="catalytic activity">
    <reaction evidence="6">
        <text>[protein]-peptidylproline (omega=180) = [protein]-peptidylproline (omega=0)</text>
        <dbReference type="Rhea" id="RHEA:16237"/>
        <dbReference type="Rhea" id="RHEA-COMP:10747"/>
        <dbReference type="Rhea" id="RHEA-COMP:10748"/>
        <dbReference type="ChEBI" id="CHEBI:83833"/>
        <dbReference type="ChEBI" id="CHEBI:83834"/>
        <dbReference type="EC" id="5.2.1.8"/>
    </reaction>
</comment>
<comment type="activity regulation">
    <text evidence="1">Binds cyclosporin A (CsA). CsA mediates some of its effects via an inhibitory action on PPIase (By similarity).</text>
</comment>
<comment type="subcellular location">
    <subcellularLocation>
        <location evidence="1">Cytoplasm</location>
    </subcellularLocation>
</comment>
<comment type="induction">
    <text evidence="4">Not induced by infection with virulent or avirulent P.syringae. Not induced by phenylmethylsulfonyl fluoride (PMSF) and yeast elicitator (YE).</text>
</comment>
<comment type="similarity">
    <text evidence="2">Belongs to the cyclophilin-type PPIase family.</text>
</comment>
<reference evidence="6 7" key="1">
    <citation type="journal article" date="2002" name="J. Integr. Plant Biol.">
        <title>Characterization of a cyclophilin cDNA from soybean cells.</title>
        <authorList>
            <person name="Kan Y.-C."/>
            <person name="Liu S.-W."/>
            <person name="Guo Z.-J."/>
            <person name="Li D.-B."/>
        </authorList>
    </citation>
    <scope>NUCLEOTIDE SEQUENCE [MRNA]</scope>
    <scope>INDUCTION</scope>
    <source>
        <strain evidence="4">cv. Williams 82</strain>
    </source>
</reference>
<reference evidence="8" key="2">
    <citation type="submission" date="2009-08" db="EMBL/GenBank/DDBJ databases">
        <authorList>
            <person name="Cheung F."/>
            <person name="Xiao Y."/>
            <person name="Chan A."/>
            <person name="Moskal W."/>
            <person name="Town C.D."/>
        </authorList>
    </citation>
    <scope>NUCLEOTIDE SEQUENCE [MRNA]</scope>
</reference>
<protein>
    <recommendedName>
        <fullName evidence="1">Peptidyl-prolyl cis-trans isomerase 1</fullName>
        <shortName evidence="1">PPIase 1</shortName>
        <ecNumber>5.2.1.8</ecNumber>
    </recommendedName>
    <alternativeName>
        <fullName evidence="5">Cyclophilin 1</fullName>
    </alternativeName>
    <alternativeName>
        <fullName evidence="1">Cyclosporin A-binding protein 1</fullName>
    </alternativeName>
    <alternativeName>
        <fullName evidence="1">Rotamase 1</fullName>
    </alternativeName>
</protein>
<keyword id="KW-0143">Chaperone</keyword>
<keyword id="KW-0963">Cytoplasm</keyword>
<keyword id="KW-0413">Isomerase</keyword>
<keyword id="KW-1185">Reference proteome</keyword>
<keyword id="KW-0697">Rotamase</keyword>
<organism>
    <name type="scientific">Glycine max</name>
    <name type="common">Soybean</name>
    <name type="synonym">Glycine hispida</name>
    <dbReference type="NCBI Taxonomy" id="3847"/>
    <lineage>
        <taxon>Eukaryota</taxon>
        <taxon>Viridiplantae</taxon>
        <taxon>Streptophyta</taxon>
        <taxon>Embryophyta</taxon>
        <taxon>Tracheophyta</taxon>
        <taxon>Spermatophyta</taxon>
        <taxon>Magnoliopsida</taxon>
        <taxon>eudicotyledons</taxon>
        <taxon>Gunneridae</taxon>
        <taxon>Pentapetalae</taxon>
        <taxon>rosids</taxon>
        <taxon>fabids</taxon>
        <taxon>Fabales</taxon>
        <taxon>Fabaceae</taxon>
        <taxon>Papilionoideae</taxon>
        <taxon>50 kb inversion clade</taxon>
        <taxon>NPAAA clade</taxon>
        <taxon>indigoferoid/millettioid clade</taxon>
        <taxon>Phaseoleae</taxon>
        <taxon>Glycine</taxon>
        <taxon>Glycine subgen. Soja</taxon>
    </lineage>
</organism>
<accession>Q8W171</accession>
<accession>C6SYU0</accession>
<evidence type="ECO:0000250" key="1">
    <source>
        <dbReference type="UniProtKB" id="O49886"/>
    </source>
</evidence>
<evidence type="ECO:0000255" key="2"/>
<evidence type="ECO:0000255" key="3">
    <source>
        <dbReference type="PROSITE-ProRule" id="PRU00156"/>
    </source>
</evidence>
<evidence type="ECO:0000269" key="4">
    <source ref="1"/>
</evidence>
<evidence type="ECO:0000303" key="5">
    <source ref="1"/>
</evidence>
<evidence type="ECO:0000305" key="6"/>
<evidence type="ECO:0000312" key="7">
    <source>
        <dbReference type="EMBL" id="AAL51087.1"/>
    </source>
</evidence>
<evidence type="ECO:0000312" key="8">
    <source>
        <dbReference type="EMBL" id="ACU14413.1"/>
    </source>
</evidence>
<feature type="chain" id="PRO_0000395399" description="Peptidyl-prolyl cis-trans isomerase 1">
    <location>
        <begin position="1"/>
        <end position="172"/>
    </location>
</feature>
<feature type="domain" description="PPIase cyclophilin-type" evidence="3">
    <location>
        <begin position="7"/>
        <end position="170"/>
    </location>
</feature>
<feature type="sequence conflict" description="In Ref. 2; ACU14413." evidence="6" ref="2">
    <original>SG</original>
    <variation>FS</variation>
    <location>
        <begin position="154"/>
        <end position="155"/>
    </location>
</feature>
<feature type="sequence conflict" description="In Ref. 2; ACU14413." evidence="6" ref="2">
    <original>P</original>
    <variation>L</variation>
    <location>
        <position position="171"/>
    </location>
</feature>
<gene>
    <name evidence="5" type="primary">Cyp1</name>
</gene>
<proteinExistence type="evidence at transcript level"/>
<sequence>MPNPKVFFDMTIGGQSAGRIVMELYADVTPRTAENFRALCTGEKGVGRSGKPLHYKGSSFHRVIPSFMCQGGDFTAGNGTGGESIYGAKFADENFVKKHTGPGILSMANAGPGTNGSQFFICTEKTEWLDGKHVVFGQVIEGLNVVKDIEKVGSGSGRTSKPVVIANCGQPS</sequence>
<dbReference type="EC" id="5.2.1.8"/>
<dbReference type="EMBL" id="AF456323">
    <property type="protein sequence ID" value="AAL51087.1"/>
    <property type="molecule type" value="mRNA"/>
</dbReference>
<dbReference type="EMBL" id="BT090338">
    <property type="protein sequence ID" value="ACU14413.1"/>
    <property type="molecule type" value="mRNA"/>
</dbReference>
<dbReference type="SMR" id="Q8W171"/>
<dbReference type="FunCoup" id="Q8W171">
    <property type="interactions" value="3294"/>
</dbReference>
<dbReference type="STRING" id="3847.Q8W171"/>
<dbReference type="PaxDb" id="3847-GLYMA11G10480.2"/>
<dbReference type="ProMEX" id="Q8W171"/>
<dbReference type="eggNOG" id="KOG0865">
    <property type="taxonomic scope" value="Eukaryota"/>
</dbReference>
<dbReference type="InParanoid" id="Q8W171"/>
<dbReference type="Proteomes" id="UP000008827">
    <property type="component" value="Unplaced"/>
</dbReference>
<dbReference type="GO" id="GO:0005737">
    <property type="term" value="C:cytoplasm"/>
    <property type="evidence" value="ECO:0000318"/>
    <property type="project" value="GO_Central"/>
</dbReference>
<dbReference type="GO" id="GO:0016018">
    <property type="term" value="F:cyclosporin A binding"/>
    <property type="evidence" value="ECO:0000318"/>
    <property type="project" value="GO_Central"/>
</dbReference>
<dbReference type="GO" id="GO:0003755">
    <property type="term" value="F:peptidyl-prolyl cis-trans isomerase activity"/>
    <property type="evidence" value="ECO:0000318"/>
    <property type="project" value="GO_Central"/>
</dbReference>
<dbReference type="GO" id="GO:0006457">
    <property type="term" value="P:protein folding"/>
    <property type="evidence" value="ECO:0000318"/>
    <property type="project" value="GO_Central"/>
</dbReference>
<dbReference type="CDD" id="cd01926">
    <property type="entry name" value="cyclophilin_ABH_like"/>
    <property type="match status" value="1"/>
</dbReference>
<dbReference type="FunFam" id="2.40.100.10:FF:000002">
    <property type="entry name" value="Peptidyl-prolyl cis-trans isomerase"/>
    <property type="match status" value="1"/>
</dbReference>
<dbReference type="Gene3D" id="2.40.100.10">
    <property type="entry name" value="Cyclophilin-like"/>
    <property type="match status" value="1"/>
</dbReference>
<dbReference type="InterPro" id="IPR029000">
    <property type="entry name" value="Cyclophilin-like_dom_sf"/>
</dbReference>
<dbReference type="InterPro" id="IPR024936">
    <property type="entry name" value="Cyclophilin-type_PPIase"/>
</dbReference>
<dbReference type="InterPro" id="IPR020892">
    <property type="entry name" value="Cyclophilin-type_PPIase_CS"/>
</dbReference>
<dbReference type="InterPro" id="IPR002130">
    <property type="entry name" value="Cyclophilin-type_PPIase_dom"/>
</dbReference>
<dbReference type="PANTHER" id="PTHR11071">
    <property type="entry name" value="PEPTIDYL-PROLYL CIS-TRANS ISOMERASE"/>
    <property type="match status" value="1"/>
</dbReference>
<dbReference type="PANTHER" id="PTHR11071:SF538">
    <property type="entry name" value="PEPTIDYL-PROLYL CIS-TRANS ISOMERASE CYP19-1"/>
    <property type="match status" value="1"/>
</dbReference>
<dbReference type="Pfam" id="PF00160">
    <property type="entry name" value="Pro_isomerase"/>
    <property type="match status" value="1"/>
</dbReference>
<dbReference type="PIRSF" id="PIRSF001467">
    <property type="entry name" value="Peptidylpro_ismrse"/>
    <property type="match status" value="1"/>
</dbReference>
<dbReference type="PRINTS" id="PR00153">
    <property type="entry name" value="CSAPPISMRASE"/>
</dbReference>
<dbReference type="SUPFAM" id="SSF50891">
    <property type="entry name" value="Cyclophilin-like"/>
    <property type="match status" value="1"/>
</dbReference>
<dbReference type="PROSITE" id="PS00170">
    <property type="entry name" value="CSA_PPIASE_1"/>
    <property type="match status" value="1"/>
</dbReference>
<dbReference type="PROSITE" id="PS50072">
    <property type="entry name" value="CSA_PPIASE_2"/>
    <property type="match status" value="1"/>
</dbReference>
<name>CYP1_SOYBN</name>